<reference key="1">
    <citation type="journal article" date="2002" name="Proc. Natl. Acad. Sci. U.S.A.">
        <title>Genome sequence and comparative microarray analysis of serotype M18 group A Streptococcus strains associated with acute rheumatic fever outbreaks.</title>
        <authorList>
            <person name="Smoot J.C."/>
            <person name="Barbian K.D."/>
            <person name="Van Gompel J.J."/>
            <person name="Smoot L.M."/>
            <person name="Chaussee M.S."/>
            <person name="Sylva G.L."/>
            <person name="Sturdevant D.E."/>
            <person name="Ricklefs S.M."/>
            <person name="Porcella S.F."/>
            <person name="Parkins L.D."/>
            <person name="Beres S.B."/>
            <person name="Campbell D.S."/>
            <person name="Smith T.M."/>
            <person name="Zhang Q."/>
            <person name="Kapur V."/>
            <person name="Daly J.A."/>
            <person name="Veasy L.G."/>
            <person name="Musser J.M."/>
        </authorList>
    </citation>
    <scope>NUCLEOTIDE SEQUENCE [LARGE SCALE GENOMIC DNA]</scope>
    <source>
        <strain>MGAS8232</strain>
    </source>
</reference>
<proteinExistence type="inferred from homology"/>
<name>RPOA_STRP8</name>
<protein>
    <recommendedName>
        <fullName evidence="1">DNA-directed RNA polymerase subunit alpha</fullName>
        <shortName evidence="1">RNAP subunit alpha</shortName>
        <ecNumber evidence="1">2.7.7.6</ecNumber>
    </recommendedName>
    <alternativeName>
        <fullName evidence="1">RNA polymerase subunit alpha</fullName>
    </alternativeName>
    <alternativeName>
        <fullName evidence="1">Transcriptase subunit alpha</fullName>
    </alternativeName>
</protein>
<feature type="chain" id="PRO_0000175399" description="DNA-directed RNA polymerase subunit alpha">
    <location>
        <begin position="1"/>
        <end position="312"/>
    </location>
</feature>
<feature type="region of interest" description="Alpha N-terminal domain (alpha-NTD)" evidence="1">
    <location>
        <begin position="1"/>
        <end position="226"/>
    </location>
</feature>
<feature type="region of interest" description="Alpha C-terminal domain (alpha-CTD)" evidence="1">
    <location>
        <begin position="243"/>
        <end position="312"/>
    </location>
</feature>
<evidence type="ECO:0000255" key="1">
    <source>
        <dbReference type="HAMAP-Rule" id="MF_00059"/>
    </source>
</evidence>
<organism>
    <name type="scientific">Streptococcus pyogenes serotype M18 (strain MGAS8232)</name>
    <dbReference type="NCBI Taxonomy" id="186103"/>
    <lineage>
        <taxon>Bacteria</taxon>
        <taxon>Bacillati</taxon>
        <taxon>Bacillota</taxon>
        <taxon>Bacilli</taxon>
        <taxon>Lactobacillales</taxon>
        <taxon>Streptococcaceae</taxon>
        <taxon>Streptococcus</taxon>
    </lineage>
</organism>
<comment type="function">
    <text evidence="1">DNA-dependent RNA polymerase catalyzes the transcription of DNA into RNA using the four ribonucleoside triphosphates as substrates.</text>
</comment>
<comment type="catalytic activity">
    <reaction evidence="1">
        <text>RNA(n) + a ribonucleoside 5'-triphosphate = RNA(n+1) + diphosphate</text>
        <dbReference type="Rhea" id="RHEA:21248"/>
        <dbReference type="Rhea" id="RHEA-COMP:14527"/>
        <dbReference type="Rhea" id="RHEA-COMP:17342"/>
        <dbReference type="ChEBI" id="CHEBI:33019"/>
        <dbReference type="ChEBI" id="CHEBI:61557"/>
        <dbReference type="ChEBI" id="CHEBI:140395"/>
        <dbReference type="EC" id="2.7.7.6"/>
    </reaction>
</comment>
<comment type="subunit">
    <text evidence="1">Homodimer. The RNAP catalytic core consists of 2 alpha, 1 beta, 1 beta' and 1 omega subunit. When a sigma factor is associated with the core the holoenzyme is formed, which can initiate transcription.</text>
</comment>
<comment type="domain">
    <text evidence="1">The N-terminal domain is essential for RNAP assembly and basal transcription, whereas the C-terminal domain is involved in interaction with transcriptional regulators and with upstream promoter elements.</text>
</comment>
<comment type="similarity">
    <text evidence="1">Belongs to the RNA polymerase alpha chain family.</text>
</comment>
<sequence>MIEFEKPIITKIDENKDYGRFVIEPLERGYGTTLGNSLRRVLLSSLPGAAVTSIKIDGVLHEFDTIPGVREDVMQIILNVKGLAVKSYVEDEKIIELEVEGPAEVTAGDILTDSDIELVNPDHYLFTIAEGHSLRATMTVAKKRGYVPAEGNKKDDAPVGTLAVDSIYTPVKKVNYQVEPARVGSNDGFDKLTIEIMTNGTIIPEDALGLSARVLIEHLNLFTDLTEVAKATEVMKETEKVNDEKVLDRTIEELDLSVRSYNCLKRAGINTVFDLTEKSEPEMMKVRNLGRKSLEEVKVKLADLGLGLKNDK</sequence>
<dbReference type="EC" id="2.7.7.6" evidence="1"/>
<dbReference type="EMBL" id="AE009949">
    <property type="protein sequence ID" value="AAL96902.1"/>
    <property type="molecule type" value="Genomic_DNA"/>
</dbReference>
<dbReference type="RefSeq" id="WP_002986607.1">
    <property type="nucleotide sequence ID" value="NC_003485.1"/>
</dbReference>
<dbReference type="SMR" id="P66711"/>
<dbReference type="KEGG" id="spm:spyM18_0079"/>
<dbReference type="HOGENOM" id="CLU_053084_0_1_9"/>
<dbReference type="GO" id="GO:0005737">
    <property type="term" value="C:cytoplasm"/>
    <property type="evidence" value="ECO:0007669"/>
    <property type="project" value="UniProtKB-ARBA"/>
</dbReference>
<dbReference type="GO" id="GO:0000428">
    <property type="term" value="C:DNA-directed RNA polymerase complex"/>
    <property type="evidence" value="ECO:0007669"/>
    <property type="project" value="UniProtKB-KW"/>
</dbReference>
<dbReference type="GO" id="GO:0003677">
    <property type="term" value="F:DNA binding"/>
    <property type="evidence" value="ECO:0007669"/>
    <property type="project" value="UniProtKB-UniRule"/>
</dbReference>
<dbReference type="GO" id="GO:0003899">
    <property type="term" value="F:DNA-directed RNA polymerase activity"/>
    <property type="evidence" value="ECO:0007669"/>
    <property type="project" value="UniProtKB-UniRule"/>
</dbReference>
<dbReference type="GO" id="GO:0046983">
    <property type="term" value="F:protein dimerization activity"/>
    <property type="evidence" value="ECO:0007669"/>
    <property type="project" value="InterPro"/>
</dbReference>
<dbReference type="GO" id="GO:0006351">
    <property type="term" value="P:DNA-templated transcription"/>
    <property type="evidence" value="ECO:0007669"/>
    <property type="project" value="UniProtKB-UniRule"/>
</dbReference>
<dbReference type="CDD" id="cd06928">
    <property type="entry name" value="RNAP_alpha_NTD"/>
    <property type="match status" value="1"/>
</dbReference>
<dbReference type="FunFam" id="1.10.150.20:FF:000001">
    <property type="entry name" value="DNA-directed RNA polymerase subunit alpha"/>
    <property type="match status" value="1"/>
</dbReference>
<dbReference type="FunFam" id="2.170.120.12:FF:000001">
    <property type="entry name" value="DNA-directed RNA polymerase subunit alpha"/>
    <property type="match status" value="1"/>
</dbReference>
<dbReference type="Gene3D" id="1.10.150.20">
    <property type="entry name" value="5' to 3' exonuclease, C-terminal subdomain"/>
    <property type="match status" value="1"/>
</dbReference>
<dbReference type="Gene3D" id="2.170.120.12">
    <property type="entry name" value="DNA-directed RNA polymerase, insert domain"/>
    <property type="match status" value="1"/>
</dbReference>
<dbReference type="Gene3D" id="3.30.1360.10">
    <property type="entry name" value="RNA polymerase, RBP11-like subunit"/>
    <property type="match status" value="1"/>
</dbReference>
<dbReference type="HAMAP" id="MF_00059">
    <property type="entry name" value="RNApol_bact_RpoA"/>
    <property type="match status" value="1"/>
</dbReference>
<dbReference type="InterPro" id="IPR011262">
    <property type="entry name" value="DNA-dir_RNA_pol_insert"/>
</dbReference>
<dbReference type="InterPro" id="IPR011263">
    <property type="entry name" value="DNA-dir_RNA_pol_RpoA/D/Rpb3"/>
</dbReference>
<dbReference type="InterPro" id="IPR011773">
    <property type="entry name" value="DNA-dir_RpoA"/>
</dbReference>
<dbReference type="InterPro" id="IPR036603">
    <property type="entry name" value="RBP11-like"/>
</dbReference>
<dbReference type="InterPro" id="IPR011260">
    <property type="entry name" value="RNAP_asu_C"/>
</dbReference>
<dbReference type="InterPro" id="IPR036643">
    <property type="entry name" value="RNApol_insert_sf"/>
</dbReference>
<dbReference type="NCBIfam" id="NF003513">
    <property type="entry name" value="PRK05182.1-2"/>
    <property type="match status" value="1"/>
</dbReference>
<dbReference type="NCBIfam" id="NF003515">
    <property type="entry name" value="PRK05182.2-1"/>
    <property type="match status" value="1"/>
</dbReference>
<dbReference type="NCBIfam" id="NF003518">
    <property type="entry name" value="PRK05182.2-4"/>
    <property type="match status" value="1"/>
</dbReference>
<dbReference type="NCBIfam" id="NF003519">
    <property type="entry name" value="PRK05182.2-5"/>
    <property type="match status" value="1"/>
</dbReference>
<dbReference type="NCBIfam" id="TIGR02027">
    <property type="entry name" value="rpoA"/>
    <property type="match status" value="1"/>
</dbReference>
<dbReference type="Pfam" id="PF01000">
    <property type="entry name" value="RNA_pol_A_bac"/>
    <property type="match status" value="1"/>
</dbReference>
<dbReference type="Pfam" id="PF03118">
    <property type="entry name" value="RNA_pol_A_CTD"/>
    <property type="match status" value="1"/>
</dbReference>
<dbReference type="Pfam" id="PF01193">
    <property type="entry name" value="RNA_pol_L"/>
    <property type="match status" value="1"/>
</dbReference>
<dbReference type="SMART" id="SM00662">
    <property type="entry name" value="RPOLD"/>
    <property type="match status" value="1"/>
</dbReference>
<dbReference type="SUPFAM" id="SSF47789">
    <property type="entry name" value="C-terminal domain of RNA polymerase alpha subunit"/>
    <property type="match status" value="1"/>
</dbReference>
<dbReference type="SUPFAM" id="SSF56553">
    <property type="entry name" value="Insert subdomain of RNA polymerase alpha subunit"/>
    <property type="match status" value="1"/>
</dbReference>
<dbReference type="SUPFAM" id="SSF55257">
    <property type="entry name" value="RBP11-like subunits of RNA polymerase"/>
    <property type="match status" value="1"/>
</dbReference>
<gene>
    <name evidence="1" type="primary">rpoA</name>
    <name type="ordered locus">spyM18_0079</name>
</gene>
<accession>P66711</accession>
<accession>Q9A1U9</accession>
<keyword id="KW-0240">DNA-directed RNA polymerase</keyword>
<keyword id="KW-0548">Nucleotidyltransferase</keyword>
<keyword id="KW-0804">Transcription</keyword>
<keyword id="KW-0808">Transferase</keyword>